<feature type="chain" id="PRO_0000132455" description="Small ribosomal subunit protein uS4">
    <location>
        <begin position="1"/>
        <end position="206"/>
    </location>
</feature>
<feature type="domain" description="S4 RNA-binding" evidence="1">
    <location>
        <begin position="94"/>
        <end position="157"/>
    </location>
</feature>
<feature type="region of interest" description="Disordered" evidence="2">
    <location>
        <begin position="18"/>
        <end position="45"/>
    </location>
</feature>
<evidence type="ECO:0000255" key="1">
    <source>
        <dbReference type="HAMAP-Rule" id="MF_01306"/>
    </source>
</evidence>
<evidence type="ECO:0000256" key="2">
    <source>
        <dbReference type="SAM" id="MobiDB-lite"/>
    </source>
</evidence>
<evidence type="ECO:0000305" key="3"/>
<proteinExistence type="inferred from homology"/>
<reference key="1">
    <citation type="journal article" date="2004" name="Nature">
        <title>Genome sequence of Silicibacter pomeroyi reveals adaptations to the marine environment.</title>
        <authorList>
            <person name="Moran M.A."/>
            <person name="Buchan A."/>
            <person name="Gonzalez J.M."/>
            <person name="Heidelberg J.F."/>
            <person name="Whitman W.B."/>
            <person name="Kiene R.P."/>
            <person name="Henriksen J.R."/>
            <person name="King G.M."/>
            <person name="Belas R."/>
            <person name="Fuqua C."/>
            <person name="Brinkac L.M."/>
            <person name="Lewis M."/>
            <person name="Johri S."/>
            <person name="Weaver B."/>
            <person name="Pai G."/>
            <person name="Eisen J.A."/>
            <person name="Rahe E."/>
            <person name="Sheldon W.M."/>
            <person name="Ye W."/>
            <person name="Miller T.R."/>
            <person name="Carlton J."/>
            <person name="Rasko D.A."/>
            <person name="Paulsen I.T."/>
            <person name="Ren Q."/>
            <person name="Daugherty S.C."/>
            <person name="DeBoy R.T."/>
            <person name="Dodson R.J."/>
            <person name="Durkin A.S."/>
            <person name="Madupu R."/>
            <person name="Nelson W.C."/>
            <person name="Sullivan S.A."/>
            <person name="Rosovitz M.J."/>
            <person name="Haft D.H."/>
            <person name="Selengut J."/>
            <person name="Ward N."/>
        </authorList>
    </citation>
    <scope>NUCLEOTIDE SEQUENCE [LARGE SCALE GENOMIC DNA]</scope>
    <source>
        <strain>ATCC 700808 / DSM 15171 / DSS-3</strain>
    </source>
</reference>
<reference key="2">
    <citation type="journal article" date="2014" name="Stand. Genomic Sci.">
        <title>An updated genome annotation for the model marine bacterium Ruegeria pomeroyi DSS-3.</title>
        <authorList>
            <person name="Rivers A.R."/>
            <person name="Smith C.B."/>
            <person name="Moran M.A."/>
        </authorList>
    </citation>
    <scope>GENOME REANNOTATION</scope>
    <source>
        <strain>ATCC 700808 / DSM 15171 / DSS-3</strain>
    </source>
</reference>
<name>RS4_RUEPO</name>
<sequence>MTKRTSAKYKIDRRMGENIWGRPKSPVNRREYGPGQHGQRRKGKMSDFGLQLRAKQKLKGYYGDLTEKQFRRIYGEAERVKGDTGENLIGLLERRLDAVVYRAKFVPTVFAARQFVNHGHVLVNGKRVNIPSYRVKEGDVIEVRERSKQLASVLEAVSLAERDVPDYLEVDHSKMTATFVRTPHLGDVPYAVVMEPNLVVEYYAKN</sequence>
<protein>
    <recommendedName>
        <fullName evidence="1">Small ribosomal subunit protein uS4</fullName>
    </recommendedName>
    <alternativeName>
        <fullName evidence="3">30S ribosomal protein S4</fullName>
    </alternativeName>
</protein>
<accession>Q5LNM2</accession>
<keyword id="KW-1185">Reference proteome</keyword>
<keyword id="KW-0687">Ribonucleoprotein</keyword>
<keyword id="KW-0689">Ribosomal protein</keyword>
<keyword id="KW-0694">RNA-binding</keyword>
<keyword id="KW-0699">rRNA-binding</keyword>
<organism>
    <name type="scientific">Ruegeria pomeroyi (strain ATCC 700808 / DSM 15171 / DSS-3)</name>
    <name type="common">Silicibacter pomeroyi</name>
    <dbReference type="NCBI Taxonomy" id="246200"/>
    <lineage>
        <taxon>Bacteria</taxon>
        <taxon>Pseudomonadati</taxon>
        <taxon>Pseudomonadota</taxon>
        <taxon>Alphaproteobacteria</taxon>
        <taxon>Rhodobacterales</taxon>
        <taxon>Roseobacteraceae</taxon>
        <taxon>Ruegeria</taxon>
    </lineage>
</organism>
<dbReference type="EMBL" id="CP000031">
    <property type="protein sequence ID" value="AAV96416.1"/>
    <property type="molecule type" value="Genomic_DNA"/>
</dbReference>
<dbReference type="RefSeq" id="WP_011048871.1">
    <property type="nucleotide sequence ID" value="NC_003911.12"/>
</dbReference>
<dbReference type="SMR" id="Q5LNM2"/>
<dbReference type="STRING" id="246200.SPO3181"/>
<dbReference type="PaxDb" id="246200-SPO3181"/>
<dbReference type="KEGG" id="sil:SPO3181"/>
<dbReference type="eggNOG" id="COG0522">
    <property type="taxonomic scope" value="Bacteria"/>
</dbReference>
<dbReference type="HOGENOM" id="CLU_092403_0_0_5"/>
<dbReference type="OrthoDB" id="9803672at2"/>
<dbReference type="Proteomes" id="UP000001023">
    <property type="component" value="Chromosome"/>
</dbReference>
<dbReference type="GO" id="GO:0015935">
    <property type="term" value="C:small ribosomal subunit"/>
    <property type="evidence" value="ECO:0007669"/>
    <property type="project" value="InterPro"/>
</dbReference>
<dbReference type="GO" id="GO:0019843">
    <property type="term" value="F:rRNA binding"/>
    <property type="evidence" value="ECO:0007669"/>
    <property type="project" value="UniProtKB-UniRule"/>
</dbReference>
<dbReference type="GO" id="GO:0003735">
    <property type="term" value="F:structural constituent of ribosome"/>
    <property type="evidence" value="ECO:0007669"/>
    <property type="project" value="InterPro"/>
</dbReference>
<dbReference type="GO" id="GO:0042274">
    <property type="term" value="P:ribosomal small subunit biogenesis"/>
    <property type="evidence" value="ECO:0007669"/>
    <property type="project" value="TreeGrafter"/>
</dbReference>
<dbReference type="GO" id="GO:0006412">
    <property type="term" value="P:translation"/>
    <property type="evidence" value="ECO:0007669"/>
    <property type="project" value="UniProtKB-UniRule"/>
</dbReference>
<dbReference type="CDD" id="cd00165">
    <property type="entry name" value="S4"/>
    <property type="match status" value="1"/>
</dbReference>
<dbReference type="FunFam" id="3.10.290.10:FF:000001">
    <property type="entry name" value="30S ribosomal protein S4"/>
    <property type="match status" value="1"/>
</dbReference>
<dbReference type="Gene3D" id="1.10.1050.10">
    <property type="entry name" value="Ribosomal Protein S4 Delta 41, Chain A, domain 1"/>
    <property type="match status" value="1"/>
</dbReference>
<dbReference type="Gene3D" id="3.10.290.10">
    <property type="entry name" value="RNA-binding S4 domain"/>
    <property type="match status" value="1"/>
</dbReference>
<dbReference type="HAMAP" id="MF_01306_B">
    <property type="entry name" value="Ribosomal_uS4_B"/>
    <property type="match status" value="1"/>
</dbReference>
<dbReference type="InterPro" id="IPR022801">
    <property type="entry name" value="Ribosomal_uS4"/>
</dbReference>
<dbReference type="InterPro" id="IPR005709">
    <property type="entry name" value="Ribosomal_uS4_bac-type"/>
</dbReference>
<dbReference type="InterPro" id="IPR018079">
    <property type="entry name" value="Ribosomal_uS4_CS"/>
</dbReference>
<dbReference type="InterPro" id="IPR001912">
    <property type="entry name" value="Ribosomal_uS4_N"/>
</dbReference>
<dbReference type="InterPro" id="IPR002942">
    <property type="entry name" value="S4_RNA-bd"/>
</dbReference>
<dbReference type="InterPro" id="IPR036986">
    <property type="entry name" value="S4_RNA-bd_sf"/>
</dbReference>
<dbReference type="NCBIfam" id="NF003717">
    <property type="entry name" value="PRK05327.1"/>
    <property type="match status" value="1"/>
</dbReference>
<dbReference type="NCBIfam" id="TIGR01017">
    <property type="entry name" value="rpsD_bact"/>
    <property type="match status" value="1"/>
</dbReference>
<dbReference type="PANTHER" id="PTHR11831">
    <property type="entry name" value="30S 40S RIBOSOMAL PROTEIN"/>
    <property type="match status" value="1"/>
</dbReference>
<dbReference type="PANTHER" id="PTHR11831:SF4">
    <property type="entry name" value="SMALL RIBOSOMAL SUBUNIT PROTEIN US4M"/>
    <property type="match status" value="1"/>
</dbReference>
<dbReference type="Pfam" id="PF00163">
    <property type="entry name" value="Ribosomal_S4"/>
    <property type="match status" value="1"/>
</dbReference>
<dbReference type="Pfam" id="PF01479">
    <property type="entry name" value="S4"/>
    <property type="match status" value="1"/>
</dbReference>
<dbReference type="SMART" id="SM01390">
    <property type="entry name" value="Ribosomal_S4"/>
    <property type="match status" value="1"/>
</dbReference>
<dbReference type="SMART" id="SM00363">
    <property type="entry name" value="S4"/>
    <property type="match status" value="1"/>
</dbReference>
<dbReference type="SUPFAM" id="SSF55174">
    <property type="entry name" value="Alpha-L RNA-binding motif"/>
    <property type="match status" value="1"/>
</dbReference>
<dbReference type="PROSITE" id="PS00632">
    <property type="entry name" value="RIBOSOMAL_S4"/>
    <property type="match status" value="1"/>
</dbReference>
<dbReference type="PROSITE" id="PS50889">
    <property type="entry name" value="S4"/>
    <property type="match status" value="1"/>
</dbReference>
<gene>
    <name evidence="1" type="primary">rpsD</name>
    <name type="ordered locus">SPO3181</name>
</gene>
<comment type="function">
    <text evidence="1">One of the primary rRNA binding proteins, it binds directly to 16S rRNA where it nucleates assembly of the body of the 30S subunit.</text>
</comment>
<comment type="function">
    <text evidence="1">With S5 and S12 plays an important role in translational accuracy.</text>
</comment>
<comment type="subunit">
    <text evidence="1">Part of the 30S ribosomal subunit. Contacts protein S5. The interaction surface between S4 and S5 is involved in control of translational fidelity.</text>
</comment>
<comment type="similarity">
    <text evidence="1">Belongs to the universal ribosomal protein uS4 family.</text>
</comment>